<organism>
    <name type="scientific">Aspergillus nanangensis</name>
    <dbReference type="NCBI Taxonomy" id="2582783"/>
    <lineage>
        <taxon>Eukaryota</taxon>
        <taxon>Fungi</taxon>
        <taxon>Dikarya</taxon>
        <taxon>Ascomycota</taxon>
        <taxon>Pezizomycotina</taxon>
        <taxon>Eurotiomycetes</taxon>
        <taxon>Eurotiomycetidae</taxon>
        <taxon>Eurotiales</taxon>
        <taxon>Aspergillaceae</taxon>
        <taxon>Aspergillus</taxon>
        <taxon>Aspergillus subgen. Circumdati</taxon>
    </lineage>
</organism>
<comment type="function">
    <text evidence="2">Indoleamine 2,3-dioxygenase; part of the gene cluster that mediates the biosynthesis of the benzazepine alkaloid nanangelenin A which contains an unprecedented 3,4-dihydro-1-benzazepine-2,5-dione-N-prenyl-N-acetoxy-anthranilamide scaffold (PubMed:32182055). The first step of nanangelenin biosynthesis is catalyzed by the indoleamine 2,3-dioxygenase nanC which produces N-formyl-kynurenine through the catabolism of tryptophan (PubMed:32182055). The two-module NRPS nanA then utilizes anthranilate (Ant) and L-kynurenine (L-Kyn) to assemble the dipeptide product nanangelenin B (PubMed:32182055). The first adenylation domain of nanA (A1) loads anthranilate onto the T1 domain, while A2 loads kynurenine, generated through spontaneous nonenzymatic deformylation of the nanC-supplied N-formyl-kynurenine (PubMed:32182055). The peptide bond formation between the tethered amino acids is catalyzed by the first condensation domain (C1) between anthranilate's carbonyl carbon and kynurenine's aliphatic primary amine (PubMed:32182055). The second C domain (C2) catalyzes the final cyclization event between the aromatic amine of kynurenine and the tethered carbonyl carbon, yielding nanangelenin B (PubMed:32182055). The terminal T3 domain enhances the catalytic efficiency of C2, suggesting the T2-tethered Ant-L-Kyn is transferred to T3 prior to cyclization by C2 (PubMed:32182055). Once released from nanA, nanangelenin B is then prenylated by the prenyltransferase nanD to form nanangelenin C (PubMed:32182055). Nanangelenin C is then N-hydroxylated by the FAD-dependent monooxygenase nanF and further acetylated by the acetyltransferase nanB to yield nanangelenin F (PubMed:32182055). Finally, the N-methyltransferase nanE methylates the amide nitrogen of 1-benzazepine to convert nanangelenin F into nanangelenin A (PubMed:32182055). NanE is also able to methylate most of the intermediates of the pathway such as nanangelenin B and nanangelenin C to produce nanangelenin D and nanangelenin E, respectively (PubMed:32182055).</text>
</comment>
<comment type="catalytic activity">
    <reaction evidence="1">
        <text>D-tryptophan + O2 = N-formyl-D-kynurenine</text>
        <dbReference type="Rhea" id="RHEA:14189"/>
        <dbReference type="ChEBI" id="CHEBI:15379"/>
        <dbReference type="ChEBI" id="CHEBI:57719"/>
        <dbReference type="ChEBI" id="CHEBI:60051"/>
        <dbReference type="EC" id="1.13.11.52"/>
    </reaction>
</comment>
<comment type="catalytic activity">
    <reaction evidence="1">
        <text>L-tryptophan + O2 = N-formyl-L-kynurenine</text>
        <dbReference type="Rhea" id="RHEA:24536"/>
        <dbReference type="ChEBI" id="CHEBI:15379"/>
        <dbReference type="ChEBI" id="CHEBI:57912"/>
        <dbReference type="ChEBI" id="CHEBI:58629"/>
        <dbReference type="EC" id="1.13.11.52"/>
    </reaction>
</comment>
<comment type="cofactor">
    <cofactor evidence="1">
        <name>heme</name>
        <dbReference type="ChEBI" id="CHEBI:30413"/>
    </cofactor>
    <text evidence="1">Binds 1 heme group per subunit.</text>
</comment>
<comment type="pathway">
    <text evidence="2">Secondary metabolite biosynthesis.</text>
</comment>
<comment type="similarity">
    <text evidence="4">Belongs to the indoleamine 2,3-dioxygenase family.</text>
</comment>
<dbReference type="EC" id="1.13.11.52" evidence="2"/>
<dbReference type="EMBL" id="MT024570">
    <property type="protein sequence ID" value="QIQ51363.1"/>
    <property type="molecule type" value="Genomic_DNA"/>
</dbReference>
<dbReference type="SMR" id="A0A6G9KIF9"/>
<dbReference type="OrthoDB" id="540174at2759"/>
<dbReference type="GO" id="GO:0005737">
    <property type="term" value="C:cytoplasm"/>
    <property type="evidence" value="ECO:0007669"/>
    <property type="project" value="TreeGrafter"/>
</dbReference>
<dbReference type="GO" id="GO:0020037">
    <property type="term" value="F:heme binding"/>
    <property type="evidence" value="ECO:0007669"/>
    <property type="project" value="InterPro"/>
</dbReference>
<dbReference type="GO" id="GO:0033754">
    <property type="term" value="F:indoleamine 2,3-dioxygenase activity"/>
    <property type="evidence" value="ECO:0007669"/>
    <property type="project" value="UniProtKB-EC"/>
</dbReference>
<dbReference type="GO" id="GO:0046872">
    <property type="term" value="F:metal ion binding"/>
    <property type="evidence" value="ECO:0007669"/>
    <property type="project" value="UniProtKB-KW"/>
</dbReference>
<dbReference type="GO" id="GO:0034354">
    <property type="term" value="P:'de novo' NAD biosynthetic process from L-tryptophan"/>
    <property type="evidence" value="ECO:0007669"/>
    <property type="project" value="TreeGrafter"/>
</dbReference>
<dbReference type="GO" id="GO:0019441">
    <property type="term" value="P:L-tryptophan catabolic process to kynurenine"/>
    <property type="evidence" value="ECO:0007669"/>
    <property type="project" value="InterPro"/>
</dbReference>
<dbReference type="Gene3D" id="1.20.58.480">
    <property type="match status" value="1"/>
</dbReference>
<dbReference type="InterPro" id="IPR000898">
    <property type="entry name" value="Indolamine_dOase"/>
</dbReference>
<dbReference type="InterPro" id="IPR037217">
    <property type="entry name" value="Trp/Indoleamine_2_3_dOase-like"/>
</dbReference>
<dbReference type="PANTHER" id="PTHR28657">
    <property type="entry name" value="INDOLEAMINE 2,3-DIOXYGENASE"/>
    <property type="match status" value="1"/>
</dbReference>
<dbReference type="PANTHER" id="PTHR28657:SF10">
    <property type="entry name" value="INDOLEAMINE 2,3-DIOXYGENASE"/>
    <property type="match status" value="1"/>
</dbReference>
<dbReference type="Pfam" id="PF01231">
    <property type="entry name" value="IDO"/>
    <property type="match status" value="1"/>
</dbReference>
<dbReference type="SUPFAM" id="SSF140959">
    <property type="entry name" value="Indolic compounds 2,3-dioxygenase-like"/>
    <property type="match status" value="1"/>
</dbReference>
<dbReference type="PROSITE" id="PS00876">
    <property type="entry name" value="IDO_1"/>
    <property type="match status" value="1"/>
</dbReference>
<proteinExistence type="evidence at protein level"/>
<evidence type="ECO:0000250" key="1">
    <source>
        <dbReference type="UniProtKB" id="P14902"/>
    </source>
</evidence>
<evidence type="ECO:0000269" key="2">
    <source>
    </source>
</evidence>
<evidence type="ECO:0000303" key="3">
    <source>
    </source>
</evidence>
<evidence type="ECO:0000305" key="4"/>
<keyword id="KW-0223">Dioxygenase</keyword>
<keyword id="KW-0349">Heme</keyword>
<keyword id="KW-0408">Iron</keyword>
<keyword id="KW-0479">Metal-binding</keyword>
<keyword id="KW-0560">Oxidoreductase</keyword>
<protein>
    <recommendedName>
        <fullName evidence="3">Indoleamine 2,3-dioxygenase nanC</fullName>
        <shortName evidence="3">IDO nanC</shortName>
        <ecNumber evidence="2">1.13.11.52</ecNumber>
    </recommendedName>
    <alternativeName>
        <fullName evidence="3">Nanangelenin A biosynthesis cluster protein C</fullName>
    </alternativeName>
</protein>
<sequence length="410" mass="46457">MLSPVEVDLEAYDISRVSGFLPDKCPLRKLPDPYYVPWERLTAHLEPLIRAKRLQHELDQMPVLGITRLTSQPMRRRAYVLLSFLAQAYLWGEDIPNTTLPQAIAKPLTEVSTLLEIKPFATFAAFCLWSFSVHFDDDIGGDCHKFLDNMSMTCSFTGTTDEAWFFNVSTAIEARGGRIIPSILNAISAVQNNDMLTVEGFLLDFTICLRDLCDLIDRMHENCRPSVFYHRIRPFLSGTSNNNPATENSKGVFYVQAEDGTGEWHRYSGGSNAQSSLIQLFDITLGINHDIGYKTRYLREMRSYMPAQHRRFLARMEEISNLRPYALSHGPGSSNMCSLYNSAVLGLKNLRDKHMALVFRYIIIPRAKEKAGNGLAIRQKDLVGTGGTDMIPFLRETRDDTMNAVHLPYS</sequence>
<feature type="chain" id="PRO_0000452966" description="Indoleamine 2,3-dioxygenase nanC">
    <location>
        <begin position="1"/>
        <end position="410"/>
    </location>
</feature>
<feature type="binding site" description="proximal binding residue" evidence="1">
    <location>
        <position position="309"/>
    </location>
    <ligand>
        <name>heme</name>
        <dbReference type="ChEBI" id="CHEBI:30413"/>
    </ligand>
    <ligandPart>
        <name>Fe</name>
        <dbReference type="ChEBI" id="CHEBI:18248"/>
    </ligandPart>
</feature>
<name>NANC_ASPNN</name>
<reference key="1">
    <citation type="journal article" date="2020" name="J. Am. Chem. Soc.">
        <title>Biosynthesis of a new benzazepine alkaloid nanangelenin A from Aspergillus nanangensis involves an unusual l-kynurenine-incorporating NRPS catalyzing regioselective lactamization.</title>
        <authorList>
            <person name="Li H."/>
            <person name="Gilchrist C.L.M."/>
            <person name="Phan C.S."/>
            <person name="Lacey H.J."/>
            <person name="Vuong D."/>
            <person name="Moggach S.A."/>
            <person name="Lacey E."/>
            <person name="Piggott A.M."/>
            <person name="Chooi Y.H."/>
        </authorList>
    </citation>
    <scope>NUCLEOTIDE SEQUENCE [GENOMIC DNA]</scope>
    <scope>FUNCTION</scope>
    <scope>CATALYTIC ACTIVITY</scope>
    <scope>PATHWAY</scope>
    <source>
        <strain>CBS 146238 / FRR 6048 / MST FP2251</strain>
    </source>
</reference>
<gene>
    <name evidence="3" type="primary">nanC</name>
    <name type="ORF">FE257_001450</name>
</gene>
<accession>A0A6G9KIF9</accession>